<gene>
    <name type="primary">FGA</name>
</gene>
<comment type="function">
    <text evidence="1">Cleaved by the protease thrombin to yield monomers which, together with fibrinogen beta (FGB) and fibrinogen gamma (FGG), polymerize to form an insoluble fibrin matrix. Fibrin has a major function in hemostasis as one of the primary components of blood clots. In addition, functions during the early stages of wound repair to stabilize the lesion and guide cell migration during re-epithelialization. Was originally thought to be essential for platelet aggregation, based on in vitro studies using anticoagulated blood. However, subsequent studies have shown that it is not absolutely required for thrombus formation in vivo. Enhances expression of SELP in activated platelets via an ITGB3-dependent pathway. Maternal fibrinogen is essential for successful pregnancy. Fibrin deposition is also associated with infection, where it protects against IFNG-mediated hemorrhage. May also facilitate the immune response via both innate and T-cell mediated pathways.</text>
</comment>
<comment type="subunit">
    <text evidence="2">Heterohexamer; disulfide linked. Contains 2 sets of 3 non-identical chains (alpha, beta and gamma). The 2 heterotrimers are in head to head conformation with the N-termini in a small central domain (By similarity).</text>
</comment>
<comment type="subcellular location">
    <subcellularLocation>
        <location>Secreted</location>
    </subcellularLocation>
</comment>
<comment type="domain">
    <text evidence="2">A long coiled coil structure formed by 3 polypeptide chains connects the central nodule to the C-terminal domains (distal nodules). The long C-terminal ends of the alpha chains fold back, contributing a fourth strand to the coiled coil structure.</text>
</comment>
<comment type="PTM">
    <text>Conversion of fibrinogen to fibrin is triggered by thrombin, which cleaves fibrinopeptides A and B from alpha and beta chains, and thus exposes the N-terminal polymerization sites responsible for the formation of the soft clot. The soft clot is converted into the hard clot by factor XIIIA which catalyzes the epsilon-(gamma-glutamyl)lysine cross-linking between gamma chains (stronger) and between alpha chains (weaker) of different monomers.</text>
</comment>
<comment type="PTM">
    <text>Forms F13A-mediated cross-links between a glutamine and the epsilon-amino group of a lysine residue, forming fibronectin-fibrinogen heteropolymers.</text>
</comment>
<proteinExistence type="evidence at protein level"/>
<sequence length="16" mass="1551">ADTGEGDFLAEGGGVR</sequence>
<keyword id="KW-1064">Adaptive immunity</keyword>
<keyword id="KW-0094">Blood coagulation</keyword>
<keyword id="KW-0175">Coiled coil</keyword>
<keyword id="KW-0903">Direct protein sequencing</keyword>
<keyword id="KW-1015">Disulfide bond</keyword>
<keyword id="KW-0356">Hemostasis</keyword>
<keyword id="KW-0391">Immunity</keyword>
<keyword id="KW-0399">Innate immunity</keyword>
<keyword id="KW-1185">Reference proteome</keyword>
<keyword id="KW-0964">Secreted</keyword>
<reference key="1">
    <citation type="journal article" date="1983" name="J. Biochem.">
        <title>Fibrinopeptides A and B of baboons (Papio anubis, Papio hamadryas, and Theropithecus gelada): their amino acid sequences and evolutionary rates and a molecular phylogeny for the baboons.</title>
        <authorList>
            <person name="Nakamura S."/>
            <person name="Takenaka O."/>
            <person name="Takahashi K."/>
        </authorList>
    </citation>
    <scope>PROTEIN SEQUENCE</scope>
</reference>
<organism>
    <name type="scientific">Theropithecus gelada</name>
    <name type="common">Gelada baboon</name>
    <dbReference type="NCBI Taxonomy" id="9565"/>
    <lineage>
        <taxon>Eukaryota</taxon>
        <taxon>Metazoa</taxon>
        <taxon>Chordata</taxon>
        <taxon>Craniata</taxon>
        <taxon>Vertebrata</taxon>
        <taxon>Euteleostomi</taxon>
        <taxon>Mammalia</taxon>
        <taxon>Eutheria</taxon>
        <taxon>Euarchontoglires</taxon>
        <taxon>Primates</taxon>
        <taxon>Haplorrhini</taxon>
        <taxon>Catarrhini</taxon>
        <taxon>Cercopithecidae</taxon>
        <taxon>Cercopithecinae</taxon>
        <taxon>Theropithecus</taxon>
    </lineage>
</organism>
<dbReference type="PIR" id="C28854">
    <property type="entry name" value="C28854"/>
</dbReference>
<dbReference type="SMR" id="P68115"/>
<dbReference type="Proteomes" id="UP000694411">
    <property type="component" value="Unplaced"/>
</dbReference>
<dbReference type="GO" id="GO:0005576">
    <property type="term" value="C:extracellular region"/>
    <property type="evidence" value="ECO:0007669"/>
    <property type="project" value="UniProtKB-SubCell"/>
</dbReference>
<dbReference type="GO" id="GO:0002250">
    <property type="term" value="P:adaptive immune response"/>
    <property type="evidence" value="ECO:0007669"/>
    <property type="project" value="UniProtKB-KW"/>
</dbReference>
<dbReference type="GO" id="GO:0007596">
    <property type="term" value="P:blood coagulation"/>
    <property type="evidence" value="ECO:0007669"/>
    <property type="project" value="UniProtKB-KW"/>
</dbReference>
<dbReference type="GO" id="GO:0045087">
    <property type="term" value="P:innate immune response"/>
    <property type="evidence" value="ECO:0007669"/>
    <property type="project" value="UniProtKB-KW"/>
</dbReference>
<evidence type="ECO:0000250" key="1">
    <source>
        <dbReference type="UniProtKB" id="E9PV24"/>
    </source>
</evidence>
<evidence type="ECO:0000250" key="2">
    <source>
        <dbReference type="UniProtKB" id="P02671"/>
    </source>
</evidence>
<name>FIBA_THEGE</name>
<accession>P68115</accession>
<accession>P12803</accession>
<feature type="peptide" id="PRO_0000009043" description="Fibrinopeptide A">
    <location>
        <begin position="1"/>
        <end position="16"/>
    </location>
</feature>
<feature type="non-terminal residue">
    <location>
        <position position="16"/>
    </location>
</feature>
<protein>
    <recommendedName>
        <fullName>Fibrinogen alpha chain</fullName>
    </recommendedName>
    <component>
        <recommendedName>
            <fullName>Fibrinopeptide A</fullName>
        </recommendedName>
    </component>
</protein>